<sequence>MTQKKRSPSSTRWLKEHFDDQYVKKAQKLGLRSRAVFKIDEIQGKDKLLRTGMTVVDLGAAPGGWSQFAVEQVGDNGRVIACDILPMDPIAGVDFLQGDFREETVLGALLDRVGPDKVDVVMSDMAPNMSGTQQVDQARAMYLIELALDMCNQVLRTNGSFVVKVFQGEGFDAYLNEIRKLFSAVKIRKPDSSRARSREVYIVATGFKL</sequence>
<feature type="chain" id="PRO_0000300587" description="Ribosomal RNA large subunit methyltransferase E">
    <location>
        <begin position="1"/>
        <end position="209"/>
    </location>
</feature>
<feature type="active site" description="Proton acceptor" evidence="1">
    <location>
        <position position="164"/>
    </location>
</feature>
<feature type="binding site" evidence="1">
    <location>
        <position position="63"/>
    </location>
    <ligand>
        <name>S-adenosyl-L-methionine</name>
        <dbReference type="ChEBI" id="CHEBI:59789"/>
    </ligand>
</feature>
<feature type="binding site" evidence="1">
    <location>
        <position position="65"/>
    </location>
    <ligand>
        <name>S-adenosyl-L-methionine</name>
        <dbReference type="ChEBI" id="CHEBI:59789"/>
    </ligand>
</feature>
<feature type="binding site" evidence="1">
    <location>
        <position position="83"/>
    </location>
    <ligand>
        <name>S-adenosyl-L-methionine</name>
        <dbReference type="ChEBI" id="CHEBI:59789"/>
    </ligand>
</feature>
<feature type="binding site" evidence="1">
    <location>
        <position position="99"/>
    </location>
    <ligand>
        <name>S-adenosyl-L-methionine</name>
        <dbReference type="ChEBI" id="CHEBI:59789"/>
    </ligand>
</feature>
<feature type="binding site" evidence="1">
    <location>
        <position position="124"/>
    </location>
    <ligand>
        <name>S-adenosyl-L-methionine</name>
        <dbReference type="ChEBI" id="CHEBI:59789"/>
    </ligand>
</feature>
<reference key="1">
    <citation type="journal article" date="2008" name="BMC Genomics">
        <title>The genome of Aeromonas salmonicida subsp. salmonicida A449: insights into the evolution of a fish pathogen.</title>
        <authorList>
            <person name="Reith M.E."/>
            <person name="Singh R.K."/>
            <person name="Curtis B."/>
            <person name="Boyd J.M."/>
            <person name="Bouevitch A."/>
            <person name="Kimball J."/>
            <person name="Munholland J."/>
            <person name="Murphy C."/>
            <person name="Sarty D."/>
            <person name="Williams J."/>
            <person name="Nash J.H."/>
            <person name="Johnson S.C."/>
            <person name="Brown L.L."/>
        </authorList>
    </citation>
    <scope>NUCLEOTIDE SEQUENCE [LARGE SCALE GENOMIC DNA]</scope>
    <source>
        <strain>A449</strain>
    </source>
</reference>
<proteinExistence type="inferred from homology"/>
<accession>A4SJQ7</accession>
<protein>
    <recommendedName>
        <fullName evidence="1">Ribosomal RNA large subunit methyltransferase E</fullName>
        <ecNumber evidence="1">2.1.1.166</ecNumber>
    </recommendedName>
    <alternativeName>
        <fullName evidence="1">23S rRNA Um2552 methyltransferase</fullName>
    </alternativeName>
    <alternativeName>
        <fullName evidence="1">rRNA (uridine-2'-O-)-methyltransferase</fullName>
    </alternativeName>
</protein>
<comment type="function">
    <text evidence="1">Specifically methylates the uridine in position 2552 of 23S rRNA at the 2'-O position of the ribose in the fully assembled 50S ribosomal subunit.</text>
</comment>
<comment type="catalytic activity">
    <reaction evidence="1">
        <text>uridine(2552) in 23S rRNA + S-adenosyl-L-methionine = 2'-O-methyluridine(2552) in 23S rRNA + S-adenosyl-L-homocysteine + H(+)</text>
        <dbReference type="Rhea" id="RHEA:42720"/>
        <dbReference type="Rhea" id="RHEA-COMP:10202"/>
        <dbReference type="Rhea" id="RHEA-COMP:10203"/>
        <dbReference type="ChEBI" id="CHEBI:15378"/>
        <dbReference type="ChEBI" id="CHEBI:57856"/>
        <dbReference type="ChEBI" id="CHEBI:59789"/>
        <dbReference type="ChEBI" id="CHEBI:65315"/>
        <dbReference type="ChEBI" id="CHEBI:74478"/>
        <dbReference type="EC" id="2.1.1.166"/>
    </reaction>
</comment>
<comment type="subcellular location">
    <subcellularLocation>
        <location evidence="1">Cytoplasm</location>
    </subcellularLocation>
</comment>
<comment type="similarity">
    <text evidence="1">Belongs to the class I-like SAM-binding methyltransferase superfamily. RNA methyltransferase RlmE family.</text>
</comment>
<evidence type="ECO:0000255" key="1">
    <source>
        <dbReference type="HAMAP-Rule" id="MF_01547"/>
    </source>
</evidence>
<organism>
    <name type="scientific">Aeromonas salmonicida (strain A449)</name>
    <dbReference type="NCBI Taxonomy" id="382245"/>
    <lineage>
        <taxon>Bacteria</taxon>
        <taxon>Pseudomonadati</taxon>
        <taxon>Pseudomonadota</taxon>
        <taxon>Gammaproteobacteria</taxon>
        <taxon>Aeromonadales</taxon>
        <taxon>Aeromonadaceae</taxon>
        <taxon>Aeromonas</taxon>
    </lineage>
</organism>
<gene>
    <name evidence="1" type="primary">rlmE</name>
    <name evidence="1" type="synonym">ftsJ</name>
    <name evidence="1" type="synonym">rrmJ</name>
    <name type="ordered locus">ASA_1000</name>
</gene>
<keyword id="KW-0963">Cytoplasm</keyword>
<keyword id="KW-0489">Methyltransferase</keyword>
<keyword id="KW-0698">rRNA processing</keyword>
<keyword id="KW-0949">S-adenosyl-L-methionine</keyword>
<keyword id="KW-0808">Transferase</keyword>
<dbReference type="EC" id="2.1.1.166" evidence="1"/>
<dbReference type="EMBL" id="CP000644">
    <property type="protein sequence ID" value="ABO89129.1"/>
    <property type="molecule type" value="Genomic_DNA"/>
</dbReference>
<dbReference type="RefSeq" id="WP_005317545.1">
    <property type="nucleotide sequence ID" value="NC_009348.1"/>
</dbReference>
<dbReference type="SMR" id="A4SJQ7"/>
<dbReference type="STRING" id="29491.GCA_000820065_01183"/>
<dbReference type="GeneID" id="79878663"/>
<dbReference type="KEGG" id="asa:ASA_1000"/>
<dbReference type="eggNOG" id="COG0293">
    <property type="taxonomic scope" value="Bacteria"/>
</dbReference>
<dbReference type="HOGENOM" id="CLU_009422_4_0_6"/>
<dbReference type="Proteomes" id="UP000000225">
    <property type="component" value="Chromosome"/>
</dbReference>
<dbReference type="GO" id="GO:0005737">
    <property type="term" value="C:cytoplasm"/>
    <property type="evidence" value="ECO:0007669"/>
    <property type="project" value="UniProtKB-SubCell"/>
</dbReference>
<dbReference type="GO" id="GO:0008650">
    <property type="term" value="F:rRNA (uridine-2'-O-)-methyltransferase activity"/>
    <property type="evidence" value="ECO:0007669"/>
    <property type="project" value="UniProtKB-UniRule"/>
</dbReference>
<dbReference type="CDD" id="cd02440">
    <property type="entry name" value="AdoMet_MTases"/>
    <property type="match status" value="1"/>
</dbReference>
<dbReference type="FunFam" id="3.40.50.150:FF:000005">
    <property type="entry name" value="Ribosomal RNA large subunit methyltransferase E"/>
    <property type="match status" value="1"/>
</dbReference>
<dbReference type="Gene3D" id="3.40.50.150">
    <property type="entry name" value="Vaccinia Virus protein VP39"/>
    <property type="match status" value="1"/>
</dbReference>
<dbReference type="HAMAP" id="MF_01547">
    <property type="entry name" value="RNA_methyltr_E"/>
    <property type="match status" value="1"/>
</dbReference>
<dbReference type="InterPro" id="IPR050082">
    <property type="entry name" value="RNA_methyltr_RlmE"/>
</dbReference>
<dbReference type="InterPro" id="IPR002877">
    <property type="entry name" value="RNA_MeTrfase_FtsJ_dom"/>
</dbReference>
<dbReference type="InterPro" id="IPR015507">
    <property type="entry name" value="rRNA-MeTfrase_E"/>
</dbReference>
<dbReference type="InterPro" id="IPR004512">
    <property type="entry name" value="rRNA_MeTrfase_gammaproteobac"/>
</dbReference>
<dbReference type="InterPro" id="IPR029063">
    <property type="entry name" value="SAM-dependent_MTases_sf"/>
</dbReference>
<dbReference type="NCBIfam" id="NF008390">
    <property type="entry name" value="PRK11188.1"/>
    <property type="match status" value="1"/>
</dbReference>
<dbReference type="NCBIfam" id="TIGR00438">
    <property type="entry name" value="rrmJ"/>
    <property type="match status" value="1"/>
</dbReference>
<dbReference type="PANTHER" id="PTHR10920">
    <property type="entry name" value="RIBOSOMAL RNA METHYLTRANSFERASE"/>
    <property type="match status" value="1"/>
</dbReference>
<dbReference type="PANTHER" id="PTHR10920:SF18">
    <property type="entry name" value="RRNA METHYLTRANSFERASE 2, MITOCHONDRIAL"/>
    <property type="match status" value="1"/>
</dbReference>
<dbReference type="Pfam" id="PF01728">
    <property type="entry name" value="FtsJ"/>
    <property type="match status" value="1"/>
</dbReference>
<dbReference type="PIRSF" id="PIRSF005461">
    <property type="entry name" value="23S_rRNA_mtase"/>
    <property type="match status" value="1"/>
</dbReference>
<dbReference type="SUPFAM" id="SSF53335">
    <property type="entry name" value="S-adenosyl-L-methionine-dependent methyltransferases"/>
    <property type="match status" value="1"/>
</dbReference>
<name>RLME_AERS4</name>